<accession>Q7W2P4</accession>
<feature type="chain" id="PRO_0000057895" description="Isocitrate dehydrogenase kinase/phosphatase">
    <location>
        <begin position="1"/>
        <end position="600"/>
    </location>
</feature>
<feature type="active site" evidence="1">
    <location>
        <position position="390"/>
    </location>
</feature>
<feature type="binding site" evidence="1">
    <location>
        <begin position="335"/>
        <end position="341"/>
    </location>
    <ligand>
        <name>ATP</name>
        <dbReference type="ChEBI" id="CHEBI:30616"/>
    </ligand>
</feature>
<feature type="binding site" evidence="1">
    <location>
        <position position="356"/>
    </location>
    <ligand>
        <name>ATP</name>
        <dbReference type="ChEBI" id="CHEBI:30616"/>
    </ligand>
</feature>
<name>ACEK_BORPA</name>
<comment type="function">
    <text evidence="1">Bifunctional enzyme which can phosphorylate or dephosphorylate isocitrate dehydrogenase (IDH) on a specific serine residue. This is a regulatory mechanism which enables bacteria to bypass the Krebs cycle via the glyoxylate shunt in response to the source of carbon. When bacteria are grown on glucose, IDH is fully active and unphosphorylated, but when grown on acetate or ethanol, the activity of IDH declines drastically concomitant with its phosphorylation.</text>
</comment>
<comment type="catalytic activity">
    <reaction evidence="1">
        <text>L-seryl-[isocitrate dehydrogenase] + ATP = O-phospho-L-seryl-[isocitrate dehydrogenase] + ADP + H(+)</text>
        <dbReference type="Rhea" id="RHEA:43540"/>
        <dbReference type="Rhea" id="RHEA-COMP:10605"/>
        <dbReference type="Rhea" id="RHEA-COMP:10606"/>
        <dbReference type="ChEBI" id="CHEBI:15378"/>
        <dbReference type="ChEBI" id="CHEBI:29999"/>
        <dbReference type="ChEBI" id="CHEBI:30616"/>
        <dbReference type="ChEBI" id="CHEBI:83421"/>
        <dbReference type="ChEBI" id="CHEBI:456216"/>
        <dbReference type="EC" id="2.7.11.5"/>
    </reaction>
</comment>
<comment type="subcellular location">
    <subcellularLocation>
        <location evidence="1">Cytoplasm</location>
    </subcellularLocation>
</comment>
<comment type="similarity">
    <text evidence="1">Belongs to the AceK family.</text>
</comment>
<sequence length="600" mass="68516">MIYSGDVQRIEPAPVAGPAPLDVAHLILAGFDRHYALFRYSAQRAKSLFESGDWHGMQRLSRERIEYYDMRVRECATQLDSALRGSDARTADGSRANGSAALSEAQTAFWQAVKQEFVGLLADHRQPECAETFFNSVSCRILHRDYFHNDFLFVRPAIATDYLDSRIPSYRVYYPVAEGLHKSLIRMVADFGLAVPYADLPRDAGPRLASDCQIQVLGSLFFRNTGAYIVGRLINQGTVYPFAVALRRNPAGQVCLDALLLGTDDLSTLFSFTRAYFLVDMETPAAVVNFLASLLPRKPKAELYTMLGLQKQGKTLFYRDFLHHLTHSRDAFDIAPGIRGMVMCVFTLPSYPYVFKLIKDRIDKDGMDHATVRRKYQMVKLHDRVGRMADTWEYSQVALPRSRFAPRLLEELRRLVPSLIEENGDTVVIRHVYIERRMMPLNLYLRHASDPLLEVAVREYGDAIRQLATANIFPGDMLYKNFGVTRLGRVVFYDYDEIQRMTEMNFRAIPPAPNEEAELSSEPWYAVGPNDVFPEEFGRFLLGDPRVRQAFLRHHADLLAPQWWQACRARVAQGRIEEFFPYDTDRRLHPQAAPPPRAAA</sequence>
<evidence type="ECO:0000255" key="1">
    <source>
        <dbReference type="HAMAP-Rule" id="MF_00747"/>
    </source>
</evidence>
<proteinExistence type="inferred from homology"/>
<keyword id="KW-0067">ATP-binding</keyword>
<keyword id="KW-0963">Cytoplasm</keyword>
<keyword id="KW-0329">Glyoxylate bypass</keyword>
<keyword id="KW-0378">Hydrolase</keyword>
<keyword id="KW-0418">Kinase</keyword>
<keyword id="KW-0547">Nucleotide-binding</keyword>
<keyword id="KW-0904">Protein phosphatase</keyword>
<keyword id="KW-0723">Serine/threonine-protein kinase</keyword>
<keyword id="KW-0808">Transferase</keyword>
<keyword id="KW-0816">Tricarboxylic acid cycle</keyword>
<reference key="1">
    <citation type="journal article" date="2003" name="Nat. Genet.">
        <title>Comparative analysis of the genome sequences of Bordetella pertussis, Bordetella parapertussis and Bordetella bronchiseptica.</title>
        <authorList>
            <person name="Parkhill J."/>
            <person name="Sebaihia M."/>
            <person name="Preston A."/>
            <person name="Murphy L.D."/>
            <person name="Thomson N.R."/>
            <person name="Harris D.E."/>
            <person name="Holden M.T.G."/>
            <person name="Churcher C.M."/>
            <person name="Bentley S.D."/>
            <person name="Mungall K.L."/>
            <person name="Cerdeno-Tarraga A.-M."/>
            <person name="Temple L."/>
            <person name="James K.D."/>
            <person name="Harris B."/>
            <person name="Quail M.A."/>
            <person name="Achtman M."/>
            <person name="Atkin R."/>
            <person name="Baker S."/>
            <person name="Basham D."/>
            <person name="Bason N."/>
            <person name="Cherevach I."/>
            <person name="Chillingworth T."/>
            <person name="Collins M."/>
            <person name="Cronin A."/>
            <person name="Davis P."/>
            <person name="Doggett J."/>
            <person name="Feltwell T."/>
            <person name="Goble A."/>
            <person name="Hamlin N."/>
            <person name="Hauser H."/>
            <person name="Holroyd S."/>
            <person name="Jagels K."/>
            <person name="Leather S."/>
            <person name="Moule S."/>
            <person name="Norberczak H."/>
            <person name="O'Neil S."/>
            <person name="Ormond D."/>
            <person name="Price C."/>
            <person name="Rabbinowitsch E."/>
            <person name="Rutter S."/>
            <person name="Sanders M."/>
            <person name="Saunders D."/>
            <person name="Seeger K."/>
            <person name="Sharp S."/>
            <person name="Simmonds M."/>
            <person name="Skelton J."/>
            <person name="Squares R."/>
            <person name="Squares S."/>
            <person name="Stevens K."/>
            <person name="Unwin L."/>
            <person name="Whitehead S."/>
            <person name="Barrell B.G."/>
            <person name="Maskell D.J."/>
        </authorList>
    </citation>
    <scope>NUCLEOTIDE SEQUENCE [LARGE SCALE GENOMIC DNA]</scope>
    <source>
        <strain>12822 / ATCC BAA-587 / NCTC 13253</strain>
    </source>
</reference>
<gene>
    <name evidence="1" type="primary">aceK</name>
    <name type="ordered locus">BPP4360</name>
</gene>
<dbReference type="EC" id="2.7.11.5" evidence="1"/>
<dbReference type="EC" id="3.1.3.-" evidence="1"/>
<dbReference type="EMBL" id="BX640436">
    <property type="protein sequence ID" value="CAE39639.1"/>
    <property type="molecule type" value="Genomic_DNA"/>
</dbReference>
<dbReference type="RefSeq" id="WP_010929530.1">
    <property type="nucleotide sequence ID" value="NC_002928.3"/>
</dbReference>
<dbReference type="SMR" id="Q7W2P4"/>
<dbReference type="GeneID" id="93206160"/>
<dbReference type="KEGG" id="bpa:BPP4360"/>
<dbReference type="HOGENOM" id="CLU_033804_1_1_4"/>
<dbReference type="Proteomes" id="UP000001421">
    <property type="component" value="Chromosome"/>
</dbReference>
<dbReference type="GO" id="GO:0005737">
    <property type="term" value="C:cytoplasm"/>
    <property type="evidence" value="ECO:0007669"/>
    <property type="project" value="UniProtKB-SubCell"/>
</dbReference>
<dbReference type="GO" id="GO:0008772">
    <property type="term" value="F:[isocitrate dehydrogenase (NADP+)] kinase activity"/>
    <property type="evidence" value="ECO:0007669"/>
    <property type="project" value="UniProtKB-UniRule"/>
</dbReference>
<dbReference type="GO" id="GO:0016208">
    <property type="term" value="F:AMP binding"/>
    <property type="evidence" value="ECO:0007669"/>
    <property type="project" value="TreeGrafter"/>
</dbReference>
<dbReference type="GO" id="GO:0005524">
    <property type="term" value="F:ATP binding"/>
    <property type="evidence" value="ECO:0007669"/>
    <property type="project" value="UniProtKB-UniRule"/>
</dbReference>
<dbReference type="GO" id="GO:0004721">
    <property type="term" value="F:phosphoprotein phosphatase activity"/>
    <property type="evidence" value="ECO:0007669"/>
    <property type="project" value="UniProtKB-KW"/>
</dbReference>
<dbReference type="GO" id="GO:0004674">
    <property type="term" value="F:protein serine/threonine kinase activity"/>
    <property type="evidence" value="ECO:0007669"/>
    <property type="project" value="UniProtKB-KW"/>
</dbReference>
<dbReference type="GO" id="GO:0006006">
    <property type="term" value="P:glucose metabolic process"/>
    <property type="evidence" value="ECO:0007669"/>
    <property type="project" value="InterPro"/>
</dbReference>
<dbReference type="GO" id="GO:0006097">
    <property type="term" value="P:glyoxylate cycle"/>
    <property type="evidence" value="ECO:0007669"/>
    <property type="project" value="UniProtKB-UniRule"/>
</dbReference>
<dbReference type="GO" id="GO:0006099">
    <property type="term" value="P:tricarboxylic acid cycle"/>
    <property type="evidence" value="ECO:0007669"/>
    <property type="project" value="UniProtKB-UniRule"/>
</dbReference>
<dbReference type="HAMAP" id="MF_00747">
    <property type="entry name" value="AceK"/>
    <property type="match status" value="1"/>
</dbReference>
<dbReference type="InterPro" id="IPR046855">
    <property type="entry name" value="AceK_kinase"/>
</dbReference>
<dbReference type="InterPro" id="IPR046854">
    <property type="entry name" value="AceK_regulatory"/>
</dbReference>
<dbReference type="InterPro" id="IPR010452">
    <property type="entry name" value="Isocitrate_DH_AceK"/>
</dbReference>
<dbReference type="NCBIfam" id="NF002804">
    <property type="entry name" value="PRK02946.1"/>
    <property type="match status" value="1"/>
</dbReference>
<dbReference type="PANTHER" id="PTHR39559">
    <property type="match status" value="1"/>
</dbReference>
<dbReference type="PANTHER" id="PTHR39559:SF1">
    <property type="entry name" value="ISOCITRATE DEHYDROGENASE KINASE_PHOSPHATASE"/>
    <property type="match status" value="1"/>
</dbReference>
<dbReference type="Pfam" id="PF06315">
    <property type="entry name" value="AceK_kinase"/>
    <property type="match status" value="1"/>
</dbReference>
<dbReference type="Pfam" id="PF20423">
    <property type="entry name" value="AceK_regulatory"/>
    <property type="match status" value="1"/>
</dbReference>
<dbReference type="PIRSF" id="PIRSF000719">
    <property type="entry name" value="AceK"/>
    <property type="match status" value="1"/>
</dbReference>
<organism>
    <name type="scientific">Bordetella parapertussis (strain 12822 / ATCC BAA-587 / NCTC 13253)</name>
    <dbReference type="NCBI Taxonomy" id="257311"/>
    <lineage>
        <taxon>Bacteria</taxon>
        <taxon>Pseudomonadati</taxon>
        <taxon>Pseudomonadota</taxon>
        <taxon>Betaproteobacteria</taxon>
        <taxon>Burkholderiales</taxon>
        <taxon>Alcaligenaceae</taxon>
        <taxon>Bordetella</taxon>
    </lineage>
</organism>
<protein>
    <recommendedName>
        <fullName evidence="1">Isocitrate dehydrogenase kinase/phosphatase</fullName>
        <shortName evidence="1">IDH kinase/phosphatase</shortName>
        <shortName evidence="1">IDHK/P</shortName>
        <ecNumber evidence="1">2.7.11.5</ecNumber>
        <ecNumber evidence="1">3.1.3.-</ecNumber>
    </recommendedName>
</protein>